<proteinExistence type="inferred from homology"/>
<protein>
    <recommendedName>
        <fullName evidence="1">Small ribosomal subunit protein bS16</fullName>
    </recommendedName>
    <alternativeName>
        <fullName evidence="2">30S ribosomal protein S16</fullName>
    </alternativeName>
</protein>
<dbReference type="EMBL" id="AE004969">
    <property type="protein sequence ID" value="AAW88930.1"/>
    <property type="molecule type" value="Genomic_DNA"/>
</dbReference>
<dbReference type="RefSeq" id="WP_003687476.1">
    <property type="nucleotide sequence ID" value="NC_002946.2"/>
</dbReference>
<dbReference type="RefSeq" id="YP_207342.1">
    <property type="nucleotide sequence ID" value="NC_002946.2"/>
</dbReference>
<dbReference type="SMR" id="Q5FA57"/>
<dbReference type="STRING" id="242231.NGO_0174"/>
<dbReference type="GeneID" id="66752436"/>
<dbReference type="KEGG" id="ngo:NGO_0174"/>
<dbReference type="PATRIC" id="fig|242231.10.peg.218"/>
<dbReference type="HOGENOM" id="CLU_100590_5_1_4"/>
<dbReference type="Proteomes" id="UP000000535">
    <property type="component" value="Chromosome"/>
</dbReference>
<dbReference type="GO" id="GO:0005737">
    <property type="term" value="C:cytoplasm"/>
    <property type="evidence" value="ECO:0007669"/>
    <property type="project" value="UniProtKB-ARBA"/>
</dbReference>
<dbReference type="GO" id="GO:0015935">
    <property type="term" value="C:small ribosomal subunit"/>
    <property type="evidence" value="ECO:0007669"/>
    <property type="project" value="TreeGrafter"/>
</dbReference>
<dbReference type="GO" id="GO:0003735">
    <property type="term" value="F:structural constituent of ribosome"/>
    <property type="evidence" value="ECO:0007669"/>
    <property type="project" value="InterPro"/>
</dbReference>
<dbReference type="GO" id="GO:0006412">
    <property type="term" value="P:translation"/>
    <property type="evidence" value="ECO:0007669"/>
    <property type="project" value="UniProtKB-UniRule"/>
</dbReference>
<dbReference type="FunFam" id="3.30.1320.10:FF:000001">
    <property type="entry name" value="30S ribosomal protein S16"/>
    <property type="match status" value="1"/>
</dbReference>
<dbReference type="Gene3D" id="3.30.1320.10">
    <property type="match status" value="1"/>
</dbReference>
<dbReference type="HAMAP" id="MF_00385">
    <property type="entry name" value="Ribosomal_bS16"/>
    <property type="match status" value="1"/>
</dbReference>
<dbReference type="InterPro" id="IPR000307">
    <property type="entry name" value="Ribosomal_bS16"/>
</dbReference>
<dbReference type="InterPro" id="IPR023803">
    <property type="entry name" value="Ribosomal_bS16_dom_sf"/>
</dbReference>
<dbReference type="NCBIfam" id="TIGR00002">
    <property type="entry name" value="S16"/>
    <property type="match status" value="1"/>
</dbReference>
<dbReference type="PANTHER" id="PTHR12919">
    <property type="entry name" value="30S RIBOSOMAL PROTEIN S16"/>
    <property type="match status" value="1"/>
</dbReference>
<dbReference type="PANTHER" id="PTHR12919:SF20">
    <property type="entry name" value="SMALL RIBOSOMAL SUBUNIT PROTEIN BS16M"/>
    <property type="match status" value="1"/>
</dbReference>
<dbReference type="Pfam" id="PF00886">
    <property type="entry name" value="Ribosomal_S16"/>
    <property type="match status" value="1"/>
</dbReference>
<dbReference type="SUPFAM" id="SSF54565">
    <property type="entry name" value="Ribosomal protein S16"/>
    <property type="match status" value="1"/>
</dbReference>
<evidence type="ECO:0000255" key="1">
    <source>
        <dbReference type="HAMAP-Rule" id="MF_00385"/>
    </source>
</evidence>
<evidence type="ECO:0000305" key="2"/>
<organism>
    <name type="scientific">Neisseria gonorrhoeae (strain ATCC 700825 / FA 1090)</name>
    <dbReference type="NCBI Taxonomy" id="242231"/>
    <lineage>
        <taxon>Bacteria</taxon>
        <taxon>Pseudomonadati</taxon>
        <taxon>Pseudomonadota</taxon>
        <taxon>Betaproteobacteria</taxon>
        <taxon>Neisseriales</taxon>
        <taxon>Neisseriaceae</taxon>
        <taxon>Neisseria</taxon>
    </lineage>
</organism>
<feature type="chain" id="PRO_0000243833" description="Small ribosomal subunit protein bS16">
    <location>
        <begin position="1"/>
        <end position="81"/>
    </location>
</feature>
<sequence>MVVIRLARGGSKHRPFYNVIVTDSRSRRDGRFIERVGFYNPVANEKQERVRLNADRLNHWIAQGAQVSDSVAKLIKEQKAV</sequence>
<gene>
    <name evidence="1" type="primary">rpsP</name>
    <name type="ordered locus">NGO_0174</name>
</gene>
<accession>Q5FA57</accession>
<name>RS16_NEIG1</name>
<keyword id="KW-1185">Reference proteome</keyword>
<keyword id="KW-0687">Ribonucleoprotein</keyword>
<keyword id="KW-0689">Ribosomal protein</keyword>
<reference key="1">
    <citation type="submission" date="2003-03" db="EMBL/GenBank/DDBJ databases">
        <title>The complete genome sequence of Neisseria gonorrhoeae.</title>
        <authorList>
            <person name="Lewis L.A."/>
            <person name="Gillaspy A.F."/>
            <person name="McLaughlin R.E."/>
            <person name="Gipson M."/>
            <person name="Ducey T.F."/>
            <person name="Ownbey T."/>
            <person name="Hartman K."/>
            <person name="Nydick C."/>
            <person name="Carson M.B."/>
            <person name="Vaughn J."/>
            <person name="Thomson C."/>
            <person name="Song L."/>
            <person name="Lin S."/>
            <person name="Yuan X."/>
            <person name="Najar F."/>
            <person name="Zhan M."/>
            <person name="Ren Q."/>
            <person name="Zhu H."/>
            <person name="Qi S."/>
            <person name="Kenton S.M."/>
            <person name="Lai H."/>
            <person name="White J.D."/>
            <person name="Clifton S."/>
            <person name="Roe B.A."/>
            <person name="Dyer D.W."/>
        </authorList>
    </citation>
    <scope>NUCLEOTIDE SEQUENCE [LARGE SCALE GENOMIC DNA]</scope>
    <source>
        <strain>ATCC 700825 / FA 1090</strain>
    </source>
</reference>
<comment type="similarity">
    <text evidence="1">Belongs to the bacterial ribosomal protein bS16 family.</text>
</comment>